<gene>
    <name evidence="1" type="primary">rplQ</name>
    <name type="ordered locus">Shewmr4_0225</name>
</gene>
<proteinExistence type="inferred from homology"/>
<accession>Q0HNR1</accession>
<evidence type="ECO:0000255" key="1">
    <source>
        <dbReference type="HAMAP-Rule" id="MF_01368"/>
    </source>
</evidence>
<evidence type="ECO:0000305" key="2"/>
<comment type="subunit">
    <text evidence="1">Part of the 50S ribosomal subunit. Contacts protein L32.</text>
</comment>
<comment type="similarity">
    <text evidence="1">Belongs to the bacterial ribosomal protein bL17 family.</text>
</comment>
<organism>
    <name type="scientific">Shewanella sp. (strain MR-4)</name>
    <dbReference type="NCBI Taxonomy" id="60480"/>
    <lineage>
        <taxon>Bacteria</taxon>
        <taxon>Pseudomonadati</taxon>
        <taxon>Pseudomonadota</taxon>
        <taxon>Gammaproteobacteria</taxon>
        <taxon>Alteromonadales</taxon>
        <taxon>Shewanellaceae</taxon>
        <taxon>Shewanella</taxon>
    </lineage>
</organism>
<reference key="1">
    <citation type="submission" date="2006-08" db="EMBL/GenBank/DDBJ databases">
        <title>Complete sequence of Shewanella sp. MR-4.</title>
        <authorList>
            <consortium name="US DOE Joint Genome Institute"/>
            <person name="Copeland A."/>
            <person name="Lucas S."/>
            <person name="Lapidus A."/>
            <person name="Barry K."/>
            <person name="Detter J.C."/>
            <person name="Glavina del Rio T."/>
            <person name="Hammon N."/>
            <person name="Israni S."/>
            <person name="Dalin E."/>
            <person name="Tice H."/>
            <person name="Pitluck S."/>
            <person name="Kiss H."/>
            <person name="Brettin T."/>
            <person name="Bruce D."/>
            <person name="Han C."/>
            <person name="Tapia R."/>
            <person name="Gilna P."/>
            <person name="Schmutz J."/>
            <person name="Larimer F."/>
            <person name="Land M."/>
            <person name="Hauser L."/>
            <person name="Kyrpides N."/>
            <person name="Mikhailova N."/>
            <person name="Nealson K."/>
            <person name="Konstantinidis K."/>
            <person name="Klappenbach J."/>
            <person name="Tiedje J."/>
            <person name="Richardson P."/>
        </authorList>
    </citation>
    <scope>NUCLEOTIDE SEQUENCE [LARGE SCALE GENOMIC DNA]</scope>
    <source>
        <strain>MR-4</strain>
    </source>
</reference>
<name>RL17_SHESM</name>
<dbReference type="EMBL" id="CP000446">
    <property type="protein sequence ID" value="ABI37306.1"/>
    <property type="molecule type" value="Genomic_DNA"/>
</dbReference>
<dbReference type="RefSeq" id="WP_011621033.1">
    <property type="nucleotide sequence ID" value="NC_008321.1"/>
</dbReference>
<dbReference type="SMR" id="Q0HNR1"/>
<dbReference type="GeneID" id="94726212"/>
<dbReference type="KEGG" id="she:Shewmr4_0225"/>
<dbReference type="HOGENOM" id="CLU_074407_2_0_6"/>
<dbReference type="GO" id="GO:0022625">
    <property type="term" value="C:cytosolic large ribosomal subunit"/>
    <property type="evidence" value="ECO:0007669"/>
    <property type="project" value="TreeGrafter"/>
</dbReference>
<dbReference type="GO" id="GO:0003735">
    <property type="term" value="F:structural constituent of ribosome"/>
    <property type="evidence" value="ECO:0007669"/>
    <property type="project" value="InterPro"/>
</dbReference>
<dbReference type="GO" id="GO:0006412">
    <property type="term" value="P:translation"/>
    <property type="evidence" value="ECO:0007669"/>
    <property type="project" value="UniProtKB-UniRule"/>
</dbReference>
<dbReference type="FunFam" id="3.90.1030.10:FF:000001">
    <property type="entry name" value="50S ribosomal protein L17"/>
    <property type="match status" value="1"/>
</dbReference>
<dbReference type="Gene3D" id="3.90.1030.10">
    <property type="entry name" value="Ribosomal protein L17"/>
    <property type="match status" value="1"/>
</dbReference>
<dbReference type="HAMAP" id="MF_01368">
    <property type="entry name" value="Ribosomal_bL17"/>
    <property type="match status" value="1"/>
</dbReference>
<dbReference type="InterPro" id="IPR000456">
    <property type="entry name" value="Ribosomal_bL17"/>
</dbReference>
<dbReference type="InterPro" id="IPR047859">
    <property type="entry name" value="Ribosomal_bL17_CS"/>
</dbReference>
<dbReference type="InterPro" id="IPR036373">
    <property type="entry name" value="Ribosomal_bL17_sf"/>
</dbReference>
<dbReference type="NCBIfam" id="TIGR00059">
    <property type="entry name" value="L17"/>
    <property type="match status" value="1"/>
</dbReference>
<dbReference type="PANTHER" id="PTHR14413:SF16">
    <property type="entry name" value="LARGE RIBOSOMAL SUBUNIT PROTEIN BL17M"/>
    <property type="match status" value="1"/>
</dbReference>
<dbReference type="PANTHER" id="PTHR14413">
    <property type="entry name" value="RIBOSOMAL PROTEIN L17"/>
    <property type="match status" value="1"/>
</dbReference>
<dbReference type="Pfam" id="PF01196">
    <property type="entry name" value="Ribosomal_L17"/>
    <property type="match status" value="1"/>
</dbReference>
<dbReference type="SUPFAM" id="SSF64263">
    <property type="entry name" value="Prokaryotic ribosomal protein L17"/>
    <property type="match status" value="1"/>
</dbReference>
<dbReference type="PROSITE" id="PS01167">
    <property type="entry name" value="RIBOSOMAL_L17"/>
    <property type="match status" value="1"/>
</dbReference>
<sequence>MRHRKSGRQLNRNSSHRQAMFRNMASSLVRHEIIKTTVAKAKELRRVVEPLITLAKSDSVANRRLAFARTRDAEVVGKLFTELGPRYQERPGGYTRILKCGLRAGDKAPMAYIELVGRPEAAQAVEVEAAE</sequence>
<feature type="chain" id="PRO_0000267942" description="Large ribosomal subunit protein bL17">
    <location>
        <begin position="1"/>
        <end position="131"/>
    </location>
</feature>
<keyword id="KW-0687">Ribonucleoprotein</keyword>
<keyword id="KW-0689">Ribosomal protein</keyword>
<protein>
    <recommendedName>
        <fullName evidence="1">Large ribosomal subunit protein bL17</fullName>
    </recommendedName>
    <alternativeName>
        <fullName evidence="2">50S ribosomal protein L17</fullName>
    </alternativeName>
</protein>